<comment type="function">
    <text evidence="3">May be involved in localization of sqd to the oocyte during oogenesis.</text>
</comment>
<comment type="subunit">
    <text evidence="3">Interacts (via N-terminus) with sqd; the interaction is direct and may be involved in localization of sqd to the oocyte during oogenesis.</text>
</comment>
<comment type="subcellular location">
    <subcellularLocation>
        <location>Nucleus</location>
    </subcellularLocation>
</comment>
<feature type="chain" id="PRO_0000084292" description="DNA-binding protein K10">
    <location>
        <begin position="1"/>
        <end position="463"/>
    </location>
</feature>
<feature type="repeat" description="1">
    <location>
        <begin position="87"/>
        <end position="94"/>
    </location>
</feature>
<feature type="repeat" description="2">
    <location>
        <begin position="95"/>
        <end position="102"/>
    </location>
</feature>
<feature type="repeat" description="3">
    <location>
        <begin position="103"/>
        <end position="110"/>
    </location>
</feature>
<feature type="repeat" description="4">
    <location>
        <begin position="111"/>
        <end position="118"/>
    </location>
</feature>
<feature type="repeat" description="5">
    <location>
        <begin position="119"/>
        <end position="126"/>
    </location>
</feature>
<feature type="repeat" description="6">
    <location>
        <begin position="127"/>
        <end position="134"/>
    </location>
</feature>
<feature type="repeat" description="7">
    <location>
        <begin position="135"/>
        <end position="142"/>
    </location>
</feature>
<feature type="DNA-binding region" description="H-T-H motif" evidence="1">
    <location>
        <begin position="397"/>
        <end position="416"/>
    </location>
</feature>
<feature type="region of interest" description="Disordered" evidence="2">
    <location>
        <begin position="1"/>
        <end position="304"/>
    </location>
</feature>
<feature type="region of interest" description="7 X approximate tandem repeats">
    <location>
        <begin position="87"/>
        <end position="142"/>
    </location>
</feature>
<feature type="region of interest" description="Disordered" evidence="2">
    <location>
        <begin position="426"/>
        <end position="463"/>
    </location>
</feature>
<feature type="compositionally biased region" description="Polar residues" evidence="2">
    <location>
        <begin position="1"/>
        <end position="13"/>
    </location>
</feature>
<feature type="compositionally biased region" description="Low complexity" evidence="2">
    <location>
        <begin position="14"/>
        <end position="50"/>
    </location>
</feature>
<feature type="compositionally biased region" description="Polar residues" evidence="2">
    <location>
        <begin position="85"/>
        <end position="94"/>
    </location>
</feature>
<feature type="compositionally biased region" description="Low complexity" evidence="2">
    <location>
        <begin position="142"/>
        <end position="193"/>
    </location>
</feature>
<feature type="compositionally biased region" description="Polar residues" evidence="2">
    <location>
        <begin position="194"/>
        <end position="214"/>
    </location>
</feature>
<feature type="compositionally biased region" description="Pro residues" evidence="2">
    <location>
        <begin position="225"/>
        <end position="270"/>
    </location>
</feature>
<feature type="compositionally biased region" description="Pro residues" evidence="2">
    <location>
        <begin position="282"/>
        <end position="291"/>
    </location>
</feature>
<feature type="compositionally biased region" description="Basic and acidic residues" evidence="2">
    <location>
        <begin position="430"/>
        <end position="441"/>
    </location>
</feature>
<feature type="sequence conflict" description="In Ref. 1; CAA31321." evidence="4" ref="1">
    <original>PM</original>
    <variation>HH</variation>
    <location>
        <begin position="277"/>
        <end position="278"/>
    </location>
</feature>
<feature type="sequence conflict" description="In Ref. 1; CAA31321." evidence="4" ref="1">
    <original>GGPPP</original>
    <variation>VDHHR</variation>
    <location>
        <begin position="282"/>
        <end position="286"/>
    </location>
</feature>
<gene>
    <name type="primary">fs(1)K10</name>
    <name type="ORF">CG3218</name>
</gene>
<dbReference type="EMBL" id="X12836">
    <property type="protein sequence ID" value="CAA31321.1"/>
    <property type="molecule type" value="Genomic_DNA"/>
</dbReference>
<dbReference type="EMBL" id="AE014298">
    <property type="protein sequence ID" value="AAF45758.1"/>
    <property type="molecule type" value="Genomic_DNA"/>
</dbReference>
<dbReference type="EMBL" id="AL009195">
    <property type="protein sequence ID" value="CAA15702.1"/>
    <property type="molecule type" value="Genomic_DNA"/>
</dbReference>
<dbReference type="EMBL" id="AY060415">
    <property type="protein sequence ID" value="AAL25454.1"/>
    <property type="molecule type" value="mRNA"/>
</dbReference>
<dbReference type="PIR" id="T13425">
    <property type="entry name" value="T13425"/>
</dbReference>
<dbReference type="RefSeq" id="NP_477491.1">
    <property type="nucleotide sequence ID" value="NM_058143.4"/>
</dbReference>
<dbReference type="SMR" id="P13468"/>
<dbReference type="BioGRID" id="70938">
    <property type="interactions" value="23"/>
</dbReference>
<dbReference type="DIP" id="DIP-18135N"/>
<dbReference type="FunCoup" id="P13468">
    <property type="interactions" value="575"/>
</dbReference>
<dbReference type="IntAct" id="P13468">
    <property type="interactions" value="29"/>
</dbReference>
<dbReference type="STRING" id="7227.FBpp0070380"/>
<dbReference type="PaxDb" id="7227-FBpp0070380"/>
<dbReference type="EnsemblMetazoa" id="FBtr0070396">
    <property type="protein sequence ID" value="FBpp0070380"/>
    <property type="gene ID" value="FBgn0000810"/>
</dbReference>
<dbReference type="GeneID" id="47781"/>
<dbReference type="KEGG" id="dme:Dmel_CG3218"/>
<dbReference type="AGR" id="FB:FBgn0000810"/>
<dbReference type="CTD" id="47781"/>
<dbReference type="FlyBase" id="FBgn0000810">
    <property type="gene designation" value="fs(1)K10"/>
</dbReference>
<dbReference type="VEuPathDB" id="VectorBase:FBgn0000810"/>
<dbReference type="eggNOG" id="ENOG502SZ5I">
    <property type="taxonomic scope" value="Eukaryota"/>
</dbReference>
<dbReference type="HOGENOM" id="CLU_053404_0_0_1"/>
<dbReference type="InParanoid" id="P13468"/>
<dbReference type="OMA" id="PFMRRNG"/>
<dbReference type="OrthoDB" id="273070at2759"/>
<dbReference type="PhylomeDB" id="P13468"/>
<dbReference type="BioGRID-ORCS" id="47781">
    <property type="hits" value="0 hits in 1 CRISPR screen"/>
</dbReference>
<dbReference type="GenomeRNAi" id="47781"/>
<dbReference type="PRO" id="PR:P13468"/>
<dbReference type="Proteomes" id="UP000000803">
    <property type="component" value="Chromosome X"/>
</dbReference>
<dbReference type="Bgee" id="FBgn0000810">
    <property type="expression patterns" value="Expressed in spermatocyte cyst cell (Drosophila) in testis and 72 other cell types or tissues"/>
</dbReference>
<dbReference type="GO" id="GO:0005634">
    <property type="term" value="C:nucleus"/>
    <property type="evidence" value="ECO:0000314"/>
    <property type="project" value="FlyBase"/>
</dbReference>
<dbReference type="GO" id="GO:0003677">
    <property type="term" value="F:DNA binding"/>
    <property type="evidence" value="ECO:0000250"/>
    <property type="project" value="FlyBase"/>
</dbReference>
<dbReference type="GO" id="GO:0009953">
    <property type="term" value="P:dorsal/ventral pattern formation"/>
    <property type="evidence" value="ECO:0000304"/>
    <property type="project" value="FlyBase"/>
</dbReference>
<dbReference type="GO" id="GO:0030707">
    <property type="term" value="P:follicle cell of egg chamber development"/>
    <property type="evidence" value="ECO:0000315"/>
    <property type="project" value="FlyBase"/>
</dbReference>
<dbReference type="GO" id="GO:0008298">
    <property type="term" value="P:intracellular mRNA localization"/>
    <property type="evidence" value="ECO:0000304"/>
    <property type="project" value="FlyBase"/>
</dbReference>
<dbReference type="GO" id="GO:0017148">
    <property type="term" value="P:negative regulation of translation"/>
    <property type="evidence" value="ECO:0000304"/>
    <property type="project" value="FlyBase"/>
</dbReference>
<dbReference type="GO" id="GO:0048477">
    <property type="term" value="P:oogenesis"/>
    <property type="evidence" value="ECO:0000315"/>
    <property type="project" value="FlyBase"/>
</dbReference>
<dbReference type="GO" id="GO:0019094">
    <property type="term" value="P:pole plasm mRNA localization"/>
    <property type="evidence" value="ECO:0000315"/>
    <property type="project" value="FlyBase"/>
</dbReference>
<dbReference type="GO" id="GO:0008104">
    <property type="term" value="P:protein localization"/>
    <property type="evidence" value="ECO:0000304"/>
    <property type="project" value="FlyBase"/>
</dbReference>
<dbReference type="InterPro" id="IPR051644">
    <property type="entry name" value="TRAMP_AT-DNA-binding"/>
</dbReference>
<dbReference type="PANTHER" id="PTHR46543:SF2">
    <property type="entry name" value="AGAP013096-PA"/>
    <property type="match status" value="1"/>
</dbReference>
<dbReference type="PANTHER" id="PTHR46543">
    <property type="entry name" value="ZINC FINGER CCHC DOMAIN-CONTAINING PROTEIN 7"/>
    <property type="match status" value="1"/>
</dbReference>
<organism>
    <name type="scientific">Drosophila melanogaster</name>
    <name type="common">Fruit fly</name>
    <dbReference type="NCBI Taxonomy" id="7227"/>
    <lineage>
        <taxon>Eukaryota</taxon>
        <taxon>Metazoa</taxon>
        <taxon>Ecdysozoa</taxon>
        <taxon>Arthropoda</taxon>
        <taxon>Hexapoda</taxon>
        <taxon>Insecta</taxon>
        <taxon>Pterygota</taxon>
        <taxon>Neoptera</taxon>
        <taxon>Endopterygota</taxon>
        <taxon>Diptera</taxon>
        <taxon>Brachycera</taxon>
        <taxon>Muscomorpha</taxon>
        <taxon>Ephydroidea</taxon>
        <taxon>Drosophilidae</taxon>
        <taxon>Drosophila</taxon>
        <taxon>Sophophora</taxon>
    </lineage>
</organism>
<reference key="1">
    <citation type="journal article" date="1988" name="Genes Dev.">
        <title>Role of the oocyte nucleus in determination of the dorsoventral polarity of Drosophila as revealed by molecular analysis of the K10 gene.</title>
        <authorList>
            <person name="Prost E."/>
            <person name="Deryckere F."/>
            <person name="Roos C."/>
            <person name="Haenlin M."/>
            <person name="Pantesco V."/>
            <person name="Mohier V."/>
        </authorList>
    </citation>
    <scope>NUCLEOTIDE SEQUENCE [GENOMIC DNA]</scope>
</reference>
<reference key="2">
    <citation type="journal article" date="2000" name="Science">
        <title>The genome sequence of Drosophila melanogaster.</title>
        <authorList>
            <person name="Adams M.D."/>
            <person name="Celniker S.E."/>
            <person name="Holt R.A."/>
            <person name="Evans C.A."/>
            <person name="Gocayne J.D."/>
            <person name="Amanatides P.G."/>
            <person name="Scherer S.E."/>
            <person name="Li P.W."/>
            <person name="Hoskins R.A."/>
            <person name="Galle R.F."/>
            <person name="George R.A."/>
            <person name="Lewis S.E."/>
            <person name="Richards S."/>
            <person name="Ashburner M."/>
            <person name="Henderson S.N."/>
            <person name="Sutton G.G."/>
            <person name="Wortman J.R."/>
            <person name="Yandell M.D."/>
            <person name="Zhang Q."/>
            <person name="Chen L.X."/>
            <person name="Brandon R.C."/>
            <person name="Rogers Y.-H.C."/>
            <person name="Blazej R.G."/>
            <person name="Champe M."/>
            <person name="Pfeiffer B.D."/>
            <person name="Wan K.H."/>
            <person name="Doyle C."/>
            <person name="Baxter E.G."/>
            <person name="Helt G."/>
            <person name="Nelson C.R."/>
            <person name="Miklos G.L.G."/>
            <person name="Abril J.F."/>
            <person name="Agbayani A."/>
            <person name="An H.-J."/>
            <person name="Andrews-Pfannkoch C."/>
            <person name="Baldwin D."/>
            <person name="Ballew R.M."/>
            <person name="Basu A."/>
            <person name="Baxendale J."/>
            <person name="Bayraktaroglu L."/>
            <person name="Beasley E.M."/>
            <person name="Beeson K.Y."/>
            <person name="Benos P.V."/>
            <person name="Berman B.P."/>
            <person name="Bhandari D."/>
            <person name="Bolshakov S."/>
            <person name="Borkova D."/>
            <person name="Botchan M.R."/>
            <person name="Bouck J."/>
            <person name="Brokstein P."/>
            <person name="Brottier P."/>
            <person name="Burtis K.C."/>
            <person name="Busam D.A."/>
            <person name="Butler H."/>
            <person name="Cadieu E."/>
            <person name="Center A."/>
            <person name="Chandra I."/>
            <person name="Cherry J.M."/>
            <person name="Cawley S."/>
            <person name="Dahlke C."/>
            <person name="Davenport L.B."/>
            <person name="Davies P."/>
            <person name="de Pablos B."/>
            <person name="Delcher A."/>
            <person name="Deng Z."/>
            <person name="Mays A.D."/>
            <person name="Dew I."/>
            <person name="Dietz S.M."/>
            <person name="Dodson K."/>
            <person name="Doup L.E."/>
            <person name="Downes M."/>
            <person name="Dugan-Rocha S."/>
            <person name="Dunkov B.C."/>
            <person name="Dunn P."/>
            <person name="Durbin K.J."/>
            <person name="Evangelista C.C."/>
            <person name="Ferraz C."/>
            <person name="Ferriera S."/>
            <person name="Fleischmann W."/>
            <person name="Fosler C."/>
            <person name="Gabrielian A.E."/>
            <person name="Garg N.S."/>
            <person name="Gelbart W.M."/>
            <person name="Glasser K."/>
            <person name="Glodek A."/>
            <person name="Gong F."/>
            <person name="Gorrell J.H."/>
            <person name="Gu Z."/>
            <person name="Guan P."/>
            <person name="Harris M."/>
            <person name="Harris N.L."/>
            <person name="Harvey D.A."/>
            <person name="Heiman T.J."/>
            <person name="Hernandez J.R."/>
            <person name="Houck J."/>
            <person name="Hostin D."/>
            <person name="Houston K.A."/>
            <person name="Howland T.J."/>
            <person name="Wei M.-H."/>
            <person name="Ibegwam C."/>
            <person name="Jalali M."/>
            <person name="Kalush F."/>
            <person name="Karpen G.H."/>
            <person name="Ke Z."/>
            <person name="Kennison J.A."/>
            <person name="Ketchum K.A."/>
            <person name="Kimmel B.E."/>
            <person name="Kodira C.D."/>
            <person name="Kraft C.L."/>
            <person name="Kravitz S."/>
            <person name="Kulp D."/>
            <person name="Lai Z."/>
            <person name="Lasko P."/>
            <person name="Lei Y."/>
            <person name="Levitsky A.A."/>
            <person name="Li J.H."/>
            <person name="Li Z."/>
            <person name="Liang Y."/>
            <person name="Lin X."/>
            <person name="Liu X."/>
            <person name="Mattei B."/>
            <person name="McIntosh T.C."/>
            <person name="McLeod M.P."/>
            <person name="McPherson D."/>
            <person name="Merkulov G."/>
            <person name="Milshina N.V."/>
            <person name="Mobarry C."/>
            <person name="Morris J."/>
            <person name="Moshrefi A."/>
            <person name="Mount S.M."/>
            <person name="Moy M."/>
            <person name="Murphy B."/>
            <person name="Murphy L."/>
            <person name="Muzny D.M."/>
            <person name="Nelson D.L."/>
            <person name="Nelson D.R."/>
            <person name="Nelson K.A."/>
            <person name="Nixon K."/>
            <person name="Nusskern D.R."/>
            <person name="Pacleb J.M."/>
            <person name="Palazzolo M."/>
            <person name="Pittman G.S."/>
            <person name="Pan S."/>
            <person name="Pollard J."/>
            <person name="Puri V."/>
            <person name="Reese M.G."/>
            <person name="Reinert K."/>
            <person name="Remington K."/>
            <person name="Saunders R.D.C."/>
            <person name="Scheeler F."/>
            <person name="Shen H."/>
            <person name="Shue B.C."/>
            <person name="Siden-Kiamos I."/>
            <person name="Simpson M."/>
            <person name="Skupski M.P."/>
            <person name="Smith T.J."/>
            <person name="Spier E."/>
            <person name="Spradling A.C."/>
            <person name="Stapleton M."/>
            <person name="Strong R."/>
            <person name="Sun E."/>
            <person name="Svirskas R."/>
            <person name="Tector C."/>
            <person name="Turner R."/>
            <person name="Venter E."/>
            <person name="Wang A.H."/>
            <person name="Wang X."/>
            <person name="Wang Z.-Y."/>
            <person name="Wassarman D.A."/>
            <person name="Weinstock G.M."/>
            <person name="Weissenbach J."/>
            <person name="Williams S.M."/>
            <person name="Woodage T."/>
            <person name="Worley K.C."/>
            <person name="Wu D."/>
            <person name="Yang S."/>
            <person name="Yao Q.A."/>
            <person name="Ye J."/>
            <person name="Yeh R.-F."/>
            <person name="Zaveri J.S."/>
            <person name="Zhan M."/>
            <person name="Zhang G."/>
            <person name="Zhao Q."/>
            <person name="Zheng L."/>
            <person name="Zheng X.H."/>
            <person name="Zhong F.N."/>
            <person name="Zhong W."/>
            <person name="Zhou X."/>
            <person name="Zhu S.C."/>
            <person name="Zhu X."/>
            <person name="Smith H.O."/>
            <person name="Gibbs R.A."/>
            <person name="Myers E.W."/>
            <person name="Rubin G.M."/>
            <person name="Venter J.C."/>
        </authorList>
    </citation>
    <scope>NUCLEOTIDE SEQUENCE [LARGE SCALE GENOMIC DNA]</scope>
    <source>
        <strain>Berkeley</strain>
    </source>
</reference>
<reference key="3">
    <citation type="journal article" date="2002" name="Genome Biol.">
        <title>Annotation of the Drosophila melanogaster euchromatic genome: a systematic review.</title>
        <authorList>
            <person name="Misra S."/>
            <person name="Crosby M.A."/>
            <person name="Mungall C.J."/>
            <person name="Matthews B.B."/>
            <person name="Campbell K.S."/>
            <person name="Hradecky P."/>
            <person name="Huang Y."/>
            <person name="Kaminker J.S."/>
            <person name="Millburn G.H."/>
            <person name="Prochnik S.E."/>
            <person name="Smith C.D."/>
            <person name="Tupy J.L."/>
            <person name="Whitfield E.J."/>
            <person name="Bayraktaroglu L."/>
            <person name="Berman B.P."/>
            <person name="Bettencourt B.R."/>
            <person name="Celniker S.E."/>
            <person name="de Grey A.D.N.J."/>
            <person name="Drysdale R.A."/>
            <person name="Harris N.L."/>
            <person name="Richter J."/>
            <person name="Russo S."/>
            <person name="Schroeder A.J."/>
            <person name="Shu S.Q."/>
            <person name="Stapleton M."/>
            <person name="Yamada C."/>
            <person name="Ashburner M."/>
            <person name="Gelbart W.M."/>
            <person name="Rubin G.M."/>
            <person name="Lewis S.E."/>
        </authorList>
    </citation>
    <scope>GENOME REANNOTATION</scope>
    <source>
        <strain>Berkeley</strain>
    </source>
</reference>
<reference key="4">
    <citation type="journal article" date="2000" name="Science">
        <title>From sequence to chromosome: the tip of the X chromosome of D. melanogaster.</title>
        <authorList>
            <person name="Benos P.V."/>
            <person name="Gatt M.K."/>
            <person name="Ashburner M."/>
            <person name="Murphy L."/>
            <person name="Harris D."/>
            <person name="Barrell B.G."/>
            <person name="Ferraz C."/>
            <person name="Vidal S."/>
            <person name="Brun C."/>
            <person name="Demailles J."/>
            <person name="Cadieu E."/>
            <person name="Dreano S."/>
            <person name="Gloux S."/>
            <person name="Lelaure V."/>
            <person name="Mottier S."/>
            <person name="Galibert F."/>
            <person name="Borkova D."/>
            <person name="Minana B."/>
            <person name="Kafatos F.C."/>
            <person name="Louis C."/>
            <person name="Siden-Kiamos I."/>
            <person name="Bolshakov S."/>
            <person name="Papagiannakis G."/>
            <person name="Spanos L."/>
            <person name="Cox S."/>
            <person name="Madueno E."/>
            <person name="de Pablos B."/>
            <person name="Modolell J."/>
            <person name="Peter A."/>
            <person name="Schoettler P."/>
            <person name="Werner M."/>
            <person name="Mourkioti F."/>
            <person name="Beinert N."/>
            <person name="Dowe G."/>
            <person name="Schaefer U."/>
            <person name="Jaeckle H."/>
            <person name="Bucheton A."/>
            <person name="Callister D.M."/>
            <person name="Campbell L.A."/>
            <person name="Darlamitsou A."/>
            <person name="Henderson N.S."/>
            <person name="McMillan P.J."/>
            <person name="Salles C."/>
            <person name="Tait E.A."/>
            <person name="Valenti P."/>
            <person name="Saunders R.D.C."/>
            <person name="Glover D.M."/>
        </authorList>
    </citation>
    <scope>NUCLEOTIDE SEQUENCE [LARGE SCALE GENOMIC DNA]</scope>
    <source>
        <strain>Oregon-R</strain>
    </source>
</reference>
<reference key="5">
    <citation type="journal article" date="2002" name="Genome Biol.">
        <title>A Drosophila full-length cDNA resource.</title>
        <authorList>
            <person name="Stapleton M."/>
            <person name="Carlson J.W."/>
            <person name="Brokstein P."/>
            <person name="Yu C."/>
            <person name="Champe M."/>
            <person name="George R.A."/>
            <person name="Guarin H."/>
            <person name="Kronmiller B."/>
            <person name="Pacleb J.M."/>
            <person name="Park S."/>
            <person name="Wan K.H."/>
            <person name="Rubin G.M."/>
            <person name="Celniker S.E."/>
        </authorList>
    </citation>
    <scope>NUCLEOTIDE SEQUENCE [LARGE SCALE MRNA]</scope>
    <source>
        <strain>Berkeley</strain>
        <tissue>Embryo</tissue>
    </source>
</reference>
<reference key="6">
    <citation type="journal article" date="1999" name="Genes Dev.">
        <title>Specific isoforms of squid, a Drosophila hnRNP, perform distinct roles in Gurken localization during oogenesis.</title>
        <authorList>
            <person name="Norvell A."/>
            <person name="Kelley R.L."/>
            <person name="Wehr K."/>
            <person name="Schuepbach T."/>
        </authorList>
    </citation>
    <scope>FUNCTION</scope>
    <scope>INTERACTION WITH SQD</scope>
</reference>
<accession>P13468</accession>
<accession>O46075</accession>
<accession>Q9W505</accession>
<name>K10_DROME</name>
<proteinExistence type="evidence at protein level"/>
<sequence>MVSKNQFYQNWTMQSQQQHPHQMQQQFQQQQQPNLQHRNNQSNNNNCNNNPRAAAAPYRKPFRSGKINSGPGGNGNGNRVNGNNQMMFSSSQMPSDPLYIDFSSPPPGFKHNQVGSPKKKSMKGIKQQQHPSPNQQQPPSPNQQQHPSPNQQQHPSPNQQQHPNSNQQQHLSPNQQQGKMNNQNNNHMNQSQQPFNNQMNGSDWQRHPGNNPNQIRGGFNGFQRGPPPNRPPPRLMMGPPMGPMGPGPRGPGPMGPGGPYPQMPFPPPVPGMRGPGPMGPMGGPPPPPPPLFMRRNGPGPGPMMGVPPPMHMMGPRMPPRGIPPVGPYGPMNMNGGRIMKPNPKLIKQVVKGKSSIKTLKNLINQYPIEKPWVTDEIRSEHDKKVDIENRLKGHKDDELFAQYKGQRDKFVSLYEAAREEYLKQEAATVKAKDAKSDKDKNAISSQSAAPKAGSAKDATIPNP</sequence>
<evidence type="ECO:0000255" key="1"/>
<evidence type="ECO:0000256" key="2">
    <source>
        <dbReference type="SAM" id="MobiDB-lite"/>
    </source>
</evidence>
<evidence type="ECO:0000269" key="3">
    <source>
    </source>
</evidence>
<evidence type="ECO:0000305" key="4"/>
<keyword id="KW-0238">DNA-binding</keyword>
<keyword id="KW-0539">Nucleus</keyword>
<keyword id="KW-1185">Reference proteome</keyword>
<keyword id="KW-0677">Repeat</keyword>
<protein>
    <recommendedName>
        <fullName>DNA-binding protein K10</fullName>
    </recommendedName>
    <alternativeName>
        <fullName>Female sterile protein K10</fullName>
    </alternativeName>
</protein>